<protein>
    <recommendedName>
        <fullName evidence="2">Alkyl hydroperoxide reductase AhpD</fullName>
        <ecNumber evidence="2">1.11.1.28</ecNumber>
    </recommendedName>
    <alternativeName>
        <fullName evidence="2">Alkylhydroperoxidase AhpD</fullName>
    </alternativeName>
</protein>
<feature type="chain" id="PRO_0000359498" description="Alkyl hydroperoxide reductase AhpD">
    <location>
        <begin position="1"/>
        <end position="178"/>
    </location>
</feature>
<feature type="active site" description="Proton donor" evidence="2">
    <location>
        <position position="130"/>
    </location>
</feature>
<feature type="active site" description="Cysteine sulfenic acid (-SOH) intermediate" evidence="2">
    <location>
        <position position="133"/>
    </location>
</feature>
<feature type="disulfide bond" evidence="1">
    <location>
        <begin position="130"/>
        <end position="133"/>
    </location>
</feature>
<feature type="disulfide bond" description="Interchain (with AhpC); in linked form" evidence="2">
    <location>
        <position position="133"/>
    </location>
</feature>
<comment type="function">
    <text evidence="2">Antioxidant protein with alkyl hydroperoxidase activity. Required for the reduction of the AhpC active site cysteine residues and for the regeneration of the AhpC enzyme activity.</text>
</comment>
<comment type="catalytic activity">
    <reaction evidence="2">
        <text>N(6)-[(R)-dihydrolipoyl]-L-lysyl-[lipoyl-carrier protein] + a hydroperoxide = N(6)-[(R)-lipoyl]-L-lysyl-[lipoyl-carrier protein] + an alcohol + H2O</text>
        <dbReference type="Rhea" id="RHEA:62636"/>
        <dbReference type="Rhea" id="RHEA-COMP:10502"/>
        <dbReference type="Rhea" id="RHEA-COMP:16355"/>
        <dbReference type="ChEBI" id="CHEBI:15377"/>
        <dbReference type="ChEBI" id="CHEBI:30879"/>
        <dbReference type="ChEBI" id="CHEBI:35924"/>
        <dbReference type="ChEBI" id="CHEBI:83099"/>
        <dbReference type="ChEBI" id="CHEBI:83100"/>
        <dbReference type="EC" id="1.11.1.28"/>
    </reaction>
</comment>
<comment type="subunit">
    <text evidence="2">Homotrimer.</text>
</comment>
<comment type="similarity">
    <text evidence="2">Belongs to the AhpD family.</text>
</comment>
<evidence type="ECO:0000250" key="1"/>
<evidence type="ECO:0000255" key="2">
    <source>
        <dbReference type="HAMAP-Rule" id="MF_01676"/>
    </source>
</evidence>
<keyword id="KW-0049">Antioxidant</keyword>
<keyword id="KW-1015">Disulfide bond</keyword>
<keyword id="KW-0560">Oxidoreductase</keyword>
<keyword id="KW-0575">Peroxidase</keyword>
<keyword id="KW-0676">Redox-active center</keyword>
<keyword id="KW-1185">Reference proteome</keyword>
<sequence length="178" mass="18647">MSIENLKAALPEYAKDLKLNLGSISRTTVLDEEQLWGTLLASAAATRNAQVLAEIGAEAADNLSAQAYQAALGAVSIMGMNNVFYRGRGFLEGQYDDLRAGLRMNIIANPGVDKANFELWSFAVSSVNGCSHCVVAHEHTLREAGVGREAVLEALKAAAIVCGVAQALTAAQTLAAVG</sequence>
<accession>B2HD59</accession>
<organism>
    <name type="scientific">Mycobacterium marinum (strain ATCC BAA-535 / M)</name>
    <dbReference type="NCBI Taxonomy" id="216594"/>
    <lineage>
        <taxon>Bacteria</taxon>
        <taxon>Bacillati</taxon>
        <taxon>Actinomycetota</taxon>
        <taxon>Actinomycetes</taxon>
        <taxon>Mycobacteriales</taxon>
        <taxon>Mycobacteriaceae</taxon>
        <taxon>Mycobacterium</taxon>
        <taxon>Mycobacterium ulcerans group</taxon>
    </lineage>
</organism>
<proteinExistence type="inferred from homology"/>
<dbReference type="EC" id="1.11.1.28" evidence="2"/>
<dbReference type="EMBL" id="CP000854">
    <property type="protein sequence ID" value="ACC41196.1"/>
    <property type="molecule type" value="Genomic_DNA"/>
</dbReference>
<dbReference type="RefSeq" id="WP_012394462.1">
    <property type="nucleotide sequence ID" value="NC_010612.1"/>
</dbReference>
<dbReference type="SMR" id="B2HD59"/>
<dbReference type="STRING" id="216594.MMAR_2754"/>
<dbReference type="GeneID" id="34343340"/>
<dbReference type="KEGG" id="mmi:MMAR_2754"/>
<dbReference type="eggNOG" id="COG0599">
    <property type="taxonomic scope" value="Bacteria"/>
</dbReference>
<dbReference type="HOGENOM" id="CLU_105328_0_0_11"/>
<dbReference type="OrthoDB" id="9801997at2"/>
<dbReference type="Proteomes" id="UP000001190">
    <property type="component" value="Chromosome"/>
</dbReference>
<dbReference type="GO" id="GO:0008785">
    <property type="term" value="F:alkyl hydroperoxide reductase activity"/>
    <property type="evidence" value="ECO:0007669"/>
    <property type="project" value="UniProtKB-UniRule"/>
</dbReference>
<dbReference type="GO" id="GO:0015036">
    <property type="term" value="F:disulfide oxidoreductase activity"/>
    <property type="evidence" value="ECO:0007669"/>
    <property type="project" value="TreeGrafter"/>
</dbReference>
<dbReference type="GO" id="GO:0032843">
    <property type="term" value="F:hydroperoxide reductase activity"/>
    <property type="evidence" value="ECO:0007669"/>
    <property type="project" value="InterPro"/>
</dbReference>
<dbReference type="GO" id="GO:0051920">
    <property type="term" value="F:peroxiredoxin activity"/>
    <property type="evidence" value="ECO:0007669"/>
    <property type="project" value="InterPro"/>
</dbReference>
<dbReference type="GO" id="GO:0045454">
    <property type="term" value="P:cell redox homeostasis"/>
    <property type="evidence" value="ECO:0007669"/>
    <property type="project" value="TreeGrafter"/>
</dbReference>
<dbReference type="GO" id="GO:0006979">
    <property type="term" value="P:response to oxidative stress"/>
    <property type="evidence" value="ECO:0007669"/>
    <property type="project" value="InterPro"/>
</dbReference>
<dbReference type="Gene3D" id="1.20.1290.10">
    <property type="entry name" value="AhpD-like"/>
    <property type="match status" value="1"/>
</dbReference>
<dbReference type="HAMAP" id="MF_01676">
    <property type="entry name" value="AhpD"/>
    <property type="match status" value="1"/>
</dbReference>
<dbReference type="InterPro" id="IPR004674">
    <property type="entry name" value="AhpD"/>
</dbReference>
<dbReference type="InterPro" id="IPR029032">
    <property type="entry name" value="AhpD-like"/>
</dbReference>
<dbReference type="InterPro" id="IPR004675">
    <property type="entry name" value="AhpD_core"/>
</dbReference>
<dbReference type="InterPro" id="IPR003779">
    <property type="entry name" value="CMD-like"/>
</dbReference>
<dbReference type="NCBIfam" id="TIGR00777">
    <property type="entry name" value="ahpD"/>
    <property type="match status" value="1"/>
</dbReference>
<dbReference type="NCBIfam" id="TIGR00778">
    <property type="entry name" value="ahpD_dom"/>
    <property type="match status" value="1"/>
</dbReference>
<dbReference type="PANTHER" id="PTHR33930">
    <property type="entry name" value="ALKYL HYDROPEROXIDE REDUCTASE AHPD"/>
    <property type="match status" value="1"/>
</dbReference>
<dbReference type="PANTHER" id="PTHR33930:SF7">
    <property type="entry name" value="ALKYL HYDROPEROXIDE REDUCTASE AHPD"/>
    <property type="match status" value="1"/>
</dbReference>
<dbReference type="Pfam" id="PF02627">
    <property type="entry name" value="CMD"/>
    <property type="match status" value="1"/>
</dbReference>
<dbReference type="SUPFAM" id="SSF69118">
    <property type="entry name" value="AhpD-like"/>
    <property type="match status" value="1"/>
</dbReference>
<name>AHPD_MYCMM</name>
<gene>
    <name evidence="2" type="primary">ahpD</name>
    <name type="ordered locus">MMAR_2754</name>
</gene>
<reference key="1">
    <citation type="journal article" date="2008" name="Genome Res.">
        <title>Insights from the complete genome sequence of Mycobacterium marinum on the evolution of Mycobacterium tuberculosis.</title>
        <authorList>
            <person name="Stinear T.P."/>
            <person name="Seemann T."/>
            <person name="Harrison P.F."/>
            <person name="Jenkin G.A."/>
            <person name="Davies J.K."/>
            <person name="Johnson P.D."/>
            <person name="Abdellah Z."/>
            <person name="Arrowsmith C."/>
            <person name="Chillingworth T."/>
            <person name="Churcher C."/>
            <person name="Clarke K."/>
            <person name="Cronin A."/>
            <person name="Davis P."/>
            <person name="Goodhead I."/>
            <person name="Holroyd N."/>
            <person name="Jagels K."/>
            <person name="Lord A."/>
            <person name="Moule S."/>
            <person name="Mungall K."/>
            <person name="Norbertczak H."/>
            <person name="Quail M.A."/>
            <person name="Rabbinowitsch E."/>
            <person name="Walker D."/>
            <person name="White B."/>
            <person name="Whitehead S."/>
            <person name="Small P.L."/>
            <person name="Brosch R."/>
            <person name="Ramakrishnan L."/>
            <person name="Fischbach M.A."/>
            <person name="Parkhill J."/>
            <person name="Cole S.T."/>
        </authorList>
    </citation>
    <scope>NUCLEOTIDE SEQUENCE [LARGE SCALE GENOMIC DNA]</scope>
    <source>
        <strain>ATCC BAA-535 / M</strain>
    </source>
</reference>